<proteinExistence type="inferred from homology"/>
<protein>
    <recommendedName>
        <fullName evidence="1">Der GTPase-activating protein YihI</fullName>
    </recommendedName>
</protein>
<sequence>MSRSKKSRKPGTNSNDQLVVVRTRSESELESRLRKKLKKRKGLKSGSRHSEGSESQVRQAAQKRDPRLGSKKPIPLIVAEPKKLNKQERKLAAEQELAMLEKDAQLNVLLDRLDNGEKLGIGLQKYVDEKLDRIEVLMEQLGLLDDEPEPAPAPQSKPTKKRKTEDDLLSEFEQLDVDKYQD</sequence>
<organism>
    <name type="scientific">Vibrio cholerae serotype O1 (strain ATCC 39541 / Classical Ogawa 395 / O395)</name>
    <dbReference type="NCBI Taxonomy" id="345073"/>
    <lineage>
        <taxon>Bacteria</taxon>
        <taxon>Pseudomonadati</taxon>
        <taxon>Pseudomonadota</taxon>
        <taxon>Gammaproteobacteria</taxon>
        <taxon>Vibrionales</taxon>
        <taxon>Vibrionaceae</taxon>
        <taxon>Vibrio</taxon>
    </lineage>
</organism>
<evidence type="ECO:0000255" key="1">
    <source>
        <dbReference type="HAMAP-Rule" id="MF_01058"/>
    </source>
</evidence>
<evidence type="ECO:0000256" key="2">
    <source>
        <dbReference type="SAM" id="MobiDB-lite"/>
    </source>
</evidence>
<feature type="chain" id="PRO_1000073000" description="Der GTPase-activating protein YihI">
    <location>
        <begin position="1"/>
        <end position="182"/>
    </location>
</feature>
<feature type="region of interest" description="Disordered" evidence="2">
    <location>
        <begin position="1"/>
        <end position="79"/>
    </location>
</feature>
<feature type="region of interest" description="Disordered" evidence="2">
    <location>
        <begin position="143"/>
        <end position="182"/>
    </location>
</feature>
<feature type="compositionally biased region" description="Basic and acidic residues" evidence="2">
    <location>
        <begin position="23"/>
        <end position="32"/>
    </location>
</feature>
<feature type="compositionally biased region" description="Basic residues" evidence="2">
    <location>
        <begin position="33"/>
        <end position="47"/>
    </location>
</feature>
<reference key="1">
    <citation type="submission" date="2007-03" db="EMBL/GenBank/DDBJ databases">
        <authorList>
            <person name="Heidelberg J."/>
        </authorList>
    </citation>
    <scope>NUCLEOTIDE SEQUENCE [LARGE SCALE GENOMIC DNA]</scope>
    <source>
        <strain>ATCC 39541 / Classical Ogawa 395 / O395</strain>
    </source>
</reference>
<reference key="2">
    <citation type="journal article" date="2008" name="PLoS ONE">
        <title>A recalibrated molecular clock and independent origins for the cholera pandemic clones.</title>
        <authorList>
            <person name="Feng L."/>
            <person name="Reeves P.R."/>
            <person name="Lan R."/>
            <person name="Ren Y."/>
            <person name="Gao C."/>
            <person name="Zhou Z."/>
            <person name="Ren Y."/>
            <person name="Cheng J."/>
            <person name="Wang W."/>
            <person name="Wang J."/>
            <person name="Qian W."/>
            <person name="Li D."/>
            <person name="Wang L."/>
        </authorList>
    </citation>
    <scope>NUCLEOTIDE SEQUENCE [LARGE SCALE GENOMIC DNA]</scope>
    <source>
        <strain>ATCC 39541 / Classical Ogawa 395 / O395</strain>
    </source>
</reference>
<name>YIHI_VIBC3</name>
<accession>A5F4H7</accession>
<accession>C3M2D0</accession>
<dbReference type="EMBL" id="CP000627">
    <property type="protein sequence ID" value="ABQ20042.1"/>
    <property type="molecule type" value="Genomic_DNA"/>
</dbReference>
<dbReference type="EMBL" id="CP001235">
    <property type="protein sequence ID" value="ACP08094.1"/>
    <property type="molecule type" value="Genomic_DNA"/>
</dbReference>
<dbReference type="RefSeq" id="WP_000091428.1">
    <property type="nucleotide sequence ID" value="NZ_JAACZH010000014.1"/>
</dbReference>
<dbReference type="SMR" id="A5F4H7"/>
<dbReference type="GeneID" id="69718602"/>
<dbReference type="KEGG" id="vco:VC0395_A2404"/>
<dbReference type="KEGG" id="vcr:VC395_0066"/>
<dbReference type="PATRIC" id="fig|345073.21.peg.63"/>
<dbReference type="eggNOG" id="COG3078">
    <property type="taxonomic scope" value="Bacteria"/>
</dbReference>
<dbReference type="HOGENOM" id="CLU_094104_1_0_6"/>
<dbReference type="OrthoDB" id="5677577at2"/>
<dbReference type="Proteomes" id="UP000000249">
    <property type="component" value="Chromosome 2"/>
</dbReference>
<dbReference type="GO" id="GO:0005096">
    <property type="term" value="F:GTPase activator activity"/>
    <property type="evidence" value="ECO:0007669"/>
    <property type="project" value="UniProtKB-KW"/>
</dbReference>
<dbReference type="GO" id="GO:0042254">
    <property type="term" value="P:ribosome biogenesis"/>
    <property type="evidence" value="ECO:0007669"/>
    <property type="project" value="UniProtKB-KW"/>
</dbReference>
<dbReference type="HAMAP" id="MF_01058">
    <property type="entry name" value="GAP_YihI"/>
    <property type="match status" value="1"/>
</dbReference>
<dbReference type="InterPro" id="IPR007336">
    <property type="entry name" value="YihI"/>
</dbReference>
<dbReference type="NCBIfam" id="NF003560">
    <property type="entry name" value="PRK05244.1-1"/>
    <property type="match status" value="1"/>
</dbReference>
<dbReference type="Pfam" id="PF04220">
    <property type="entry name" value="YihI"/>
    <property type="match status" value="1"/>
</dbReference>
<comment type="function">
    <text evidence="1">A GTPase-activating protein (GAP) that modifies Der/EngA GTPase function. May play a role in ribosome biogenesis.</text>
</comment>
<comment type="subunit">
    <text evidence="1">Interacts with Der.</text>
</comment>
<comment type="similarity">
    <text evidence="1">Belongs to the YihI family.</text>
</comment>
<keyword id="KW-0343">GTPase activation</keyword>
<keyword id="KW-0690">Ribosome biogenesis</keyword>
<gene>
    <name evidence="1" type="primary">yihI</name>
    <name type="ordered locus">VC0395_A2404</name>
    <name type="ordered locus">VC395_0066</name>
</gene>